<evidence type="ECO:0000255" key="1"/>
<evidence type="ECO:0000269" key="2">
    <source>
    </source>
</evidence>
<evidence type="ECO:0000303" key="3">
    <source>
    </source>
</evidence>
<evidence type="ECO:0000305" key="4"/>
<evidence type="ECO:0000312" key="5">
    <source>
        <dbReference type="Araport" id="AT1G55370"/>
    </source>
</evidence>
<evidence type="ECO:0000312" key="6">
    <source>
        <dbReference type="EMBL" id="AAG50849.1"/>
    </source>
</evidence>
<evidence type="ECO:0000312" key="7">
    <source>
        <dbReference type="EMBL" id="AAG51558.1"/>
    </source>
</evidence>
<sequence>MALVHYMNVSRSTFPLSRSSKINLSSSFASLPLQFHKNIKRLESSVPPSASASASPAFPIDVEYLRREFSGHGATFEDIGETCIARLKLDNGSSANVMLTRGMITSYKVRVWHGGKVELLHTWVEQEEEEVVIRGGVSSAFRSSDSDEISDWRLQGISGDSKDCVQMELRRSDKKIKEIELKQIISLRENTLSIELSMTNKGISPIKLEGCSLVSYLTVSTPEATYAVGLEGSDFVETTPFLPRFGVVQGEKEEEKPGFGGEEESNYKQLNREMSRIYTCAPKSFTVIDRGRRNSVVVGREGFEEVYMYSPGSRLESYTKSAYVCIGPSSLLSPISLESGCVWRGVLHLHNPNS</sequence>
<reference key="1">
    <citation type="journal article" date="2000" name="Nature">
        <title>Sequence and analysis of chromosome 1 of the plant Arabidopsis thaliana.</title>
        <authorList>
            <person name="Theologis A."/>
            <person name="Ecker J.R."/>
            <person name="Palm C.J."/>
            <person name="Federspiel N.A."/>
            <person name="Kaul S."/>
            <person name="White O."/>
            <person name="Alonso J."/>
            <person name="Altafi H."/>
            <person name="Araujo R."/>
            <person name="Bowman C.L."/>
            <person name="Brooks S.Y."/>
            <person name="Buehler E."/>
            <person name="Chan A."/>
            <person name="Chao Q."/>
            <person name="Chen H."/>
            <person name="Cheuk R.F."/>
            <person name="Chin C.W."/>
            <person name="Chung M.K."/>
            <person name="Conn L."/>
            <person name="Conway A.B."/>
            <person name="Conway A.R."/>
            <person name="Creasy T.H."/>
            <person name="Dewar K."/>
            <person name="Dunn P."/>
            <person name="Etgu P."/>
            <person name="Feldblyum T.V."/>
            <person name="Feng J.-D."/>
            <person name="Fong B."/>
            <person name="Fujii C.Y."/>
            <person name="Gill J.E."/>
            <person name="Goldsmith A.D."/>
            <person name="Haas B."/>
            <person name="Hansen N.F."/>
            <person name="Hughes B."/>
            <person name="Huizar L."/>
            <person name="Hunter J.L."/>
            <person name="Jenkins J."/>
            <person name="Johnson-Hopson C."/>
            <person name="Khan S."/>
            <person name="Khaykin E."/>
            <person name="Kim C.J."/>
            <person name="Koo H.L."/>
            <person name="Kremenetskaia I."/>
            <person name="Kurtz D.B."/>
            <person name="Kwan A."/>
            <person name="Lam B."/>
            <person name="Langin-Hooper S."/>
            <person name="Lee A."/>
            <person name="Lee J.M."/>
            <person name="Lenz C.A."/>
            <person name="Li J.H."/>
            <person name="Li Y.-P."/>
            <person name="Lin X."/>
            <person name="Liu S.X."/>
            <person name="Liu Z.A."/>
            <person name="Luros J.S."/>
            <person name="Maiti R."/>
            <person name="Marziali A."/>
            <person name="Militscher J."/>
            <person name="Miranda M."/>
            <person name="Nguyen M."/>
            <person name="Nierman W.C."/>
            <person name="Osborne B.I."/>
            <person name="Pai G."/>
            <person name="Peterson J."/>
            <person name="Pham P.K."/>
            <person name="Rizzo M."/>
            <person name="Rooney T."/>
            <person name="Rowley D."/>
            <person name="Sakano H."/>
            <person name="Salzberg S.L."/>
            <person name="Schwartz J.R."/>
            <person name="Shinn P."/>
            <person name="Southwick A.M."/>
            <person name="Sun H."/>
            <person name="Tallon L.J."/>
            <person name="Tambunga G."/>
            <person name="Toriumi M.J."/>
            <person name="Town C.D."/>
            <person name="Utterback T."/>
            <person name="Van Aken S."/>
            <person name="Vaysberg M."/>
            <person name="Vysotskaia V.S."/>
            <person name="Walker M."/>
            <person name="Wu D."/>
            <person name="Yu G."/>
            <person name="Fraser C.M."/>
            <person name="Venter J.C."/>
            <person name="Davis R.W."/>
        </authorList>
    </citation>
    <scope>NUCLEOTIDE SEQUENCE [LARGE SCALE GENOMIC DNA]</scope>
    <source>
        <strain>cv. Columbia</strain>
    </source>
</reference>
<reference key="2">
    <citation type="journal article" date="2017" name="Plant J.">
        <title>Araport11: a complete reannotation of the Arabidopsis thaliana reference genome.</title>
        <authorList>
            <person name="Cheng C.Y."/>
            <person name="Krishnakumar V."/>
            <person name="Chan A.P."/>
            <person name="Thibaud-Nissen F."/>
            <person name="Schobel S."/>
            <person name="Town C.D."/>
        </authorList>
    </citation>
    <scope>GENOME REANNOTATION</scope>
    <source>
        <strain>cv. Columbia</strain>
    </source>
</reference>
<reference key="3">
    <citation type="submission" date="2006-07" db="EMBL/GenBank/DDBJ databases">
        <title>Large-scale analysis of RIKEN Arabidopsis full-length (RAFL) cDNAs.</title>
        <authorList>
            <person name="Totoki Y."/>
            <person name="Seki M."/>
            <person name="Ishida J."/>
            <person name="Nakajima M."/>
            <person name="Enju A."/>
            <person name="Kamiya A."/>
            <person name="Narusaka M."/>
            <person name="Shin-i T."/>
            <person name="Nakagawa M."/>
            <person name="Sakamoto N."/>
            <person name="Oishi K."/>
            <person name="Kohara Y."/>
            <person name="Kobayashi M."/>
            <person name="Toyoda A."/>
            <person name="Sakaki Y."/>
            <person name="Sakurai T."/>
            <person name="Iida K."/>
            <person name="Akiyama K."/>
            <person name="Satou M."/>
            <person name="Toyoda T."/>
            <person name="Konagaya A."/>
            <person name="Carninci P."/>
            <person name="Kawai J."/>
            <person name="Hayashizaki Y."/>
            <person name="Shinozaki K."/>
        </authorList>
    </citation>
    <scope>NUCLEOTIDE SEQUENCE [LARGE SCALE MRNA] (ISOFORM 2)</scope>
    <source>
        <strain>cv. Columbia</strain>
    </source>
</reference>
<reference key="4">
    <citation type="submission" date="2002-03" db="EMBL/GenBank/DDBJ databases">
        <title>Full-length cDNA from Arabidopsis thaliana.</title>
        <authorList>
            <person name="Brover V.V."/>
            <person name="Troukhan M.E."/>
            <person name="Alexandrov N.A."/>
            <person name="Lu Y.-P."/>
            <person name="Flavell R.B."/>
            <person name="Feldmann K.A."/>
        </authorList>
    </citation>
    <scope>NUCLEOTIDE SEQUENCE [LARGE SCALE MRNA] (ISOFORM 1)</scope>
</reference>
<reference key="5">
    <citation type="journal article" date="2009" name="DNA Res.">
        <title>Analysis of multiple occurrences of alternative splicing events in Arabidopsis thaliana using novel sequenced full-length cDNAs.</title>
        <authorList>
            <person name="Iida K."/>
            <person name="Fukami-Kobayashi K."/>
            <person name="Toyoda A."/>
            <person name="Sakaki Y."/>
            <person name="Kobayashi M."/>
            <person name="Seki M."/>
            <person name="Shinozaki K."/>
        </authorList>
    </citation>
    <scope>NUCLEOTIDE SEQUENCE [LARGE SCALE MRNA] OF 7-354 (ISOFORM 1)</scope>
    <source>
        <strain>cv. Columbia</strain>
    </source>
</reference>
<reference key="6">
    <citation type="journal article" date="2009" name="Plant Cell Physiol.">
        <title>A novel nuclear-encoded protein, NDH-dependent cyclic electron flow 5, is essential for the accumulation of chloroplast NAD(P)H dehydrogenase complexes.</title>
        <authorList>
            <person name="Ishida S."/>
            <person name="Takabayashi A."/>
            <person name="Ishikawa N."/>
            <person name="Hano Y."/>
            <person name="Endo T."/>
            <person name="Sato F."/>
        </authorList>
    </citation>
    <scope>FUNCTION</scope>
    <scope>SUBCELLULAR LOCATION</scope>
    <scope>DISRUPTION PHENOTYPE</scope>
</reference>
<name>NDF5_ARATH</name>
<gene>
    <name evidence="3" type="primary">NDF5</name>
    <name evidence="5" type="ordered locus">At1g55370</name>
    <name evidence="7" type="ORF">F7A10.12</name>
    <name evidence="6" type="ORF">T18I3.2</name>
</gene>
<comment type="function">
    <text evidence="2">Required for both formation and activity of the chloroplast NAD(P)H dehydrogenase (NDH) complex of the photosynthetic electron transport chain. May function in assembly or stabilization of the NDH complex.</text>
</comment>
<comment type="subcellular location">
    <subcellularLocation>
        <location evidence="2">Plastid</location>
        <location evidence="2">Chloroplast thylakoid membrane</location>
    </subcellularLocation>
</comment>
<comment type="alternative products">
    <event type="alternative splicing"/>
    <isoform>
        <id>Q9C503-1</id>
        <name>1</name>
        <sequence type="displayed"/>
    </isoform>
    <isoform>
        <id>Q9C503-2</id>
        <name>2</name>
        <sequence type="described" ref="VSP_057692 VSP_057693"/>
    </isoform>
</comment>
<comment type="disruption phenotype">
    <text evidence="2">Impaired chloroplastic NAD(P)H dehydrogenase (NDH) activity, probably due to a reduced stability of the NDH complex.</text>
</comment>
<accession>Q9C503</accession>
<accession>B9DFW7</accession>
<accession>Q0WU84</accession>
<accession>Q8LBH1</accession>
<keyword id="KW-0025">Alternative splicing</keyword>
<keyword id="KW-0143">Chaperone</keyword>
<keyword id="KW-0150">Chloroplast</keyword>
<keyword id="KW-0472">Membrane</keyword>
<keyword id="KW-0934">Plastid</keyword>
<keyword id="KW-1185">Reference proteome</keyword>
<keyword id="KW-0793">Thylakoid</keyword>
<keyword id="KW-0809">Transit peptide</keyword>
<dbReference type="EMBL" id="AC027034">
    <property type="protein sequence ID" value="AAG51558.1"/>
    <property type="molecule type" value="Genomic_DNA"/>
</dbReference>
<dbReference type="EMBL" id="AC079287">
    <property type="protein sequence ID" value="AAG50849.1"/>
    <property type="molecule type" value="Genomic_DNA"/>
</dbReference>
<dbReference type="EMBL" id="CP002684">
    <property type="protein sequence ID" value="AEE33239.1"/>
    <property type="molecule type" value="Genomic_DNA"/>
</dbReference>
<dbReference type="EMBL" id="CP002684">
    <property type="protein sequence ID" value="AEE33240.1"/>
    <property type="molecule type" value="Genomic_DNA"/>
</dbReference>
<dbReference type="EMBL" id="AK227298">
    <property type="protein sequence ID" value="BAE99314.1"/>
    <property type="molecule type" value="mRNA"/>
</dbReference>
<dbReference type="EMBL" id="AY087212">
    <property type="protein sequence ID" value="AAM64767.1"/>
    <property type="molecule type" value="mRNA"/>
</dbReference>
<dbReference type="EMBL" id="AK316929">
    <property type="protein sequence ID" value="BAH19634.1"/>
    <property type="molecule type" value="mRNA"/>
</dbReference>
<dbReference type="PIR" id="A96596">
    <property type="entry name" value="A96596"/>
</dbReference>
<dbReference type="RefSeq" id="NP_564687.1">
    <molecule id="Q9C503-1"/>
    <property type="nucleotide sequence ID" value="NM_104413.4"/>
</dbReference>
<dbReference type="RefSeq" id="NP_849810.1">
    <molecule id="Q9C503-2"/>
    <property type="nucleotide sequence ID" value="NM_179479.3"/>
</dbReference>
<dbReference type="SMR" id="Q9C503"/>
<dbReference type="FunCoup" id="Q9C503">
    <property type="interactions" value="965"/>
</dbReference>
<dbReference type="STRING" id="3702.Q9C503"/>
<dbReference type="iPTMnet" id="Q9C503"/>
<dbReference type="PaxDb" id="3702-AT1G55370.2"/>
<dbReference type="ProteomicsDB" id="251289">
    <molecule id="Q9C503-1"/>
</dbReference>
<dbReference type="EnsemblPlants" id="AT1G55370.1">
    <molecule id="Q9C503-2"/>
    <property type="protein sequence ID" value="AT1G55370.1"/>
    <property type="gene ID" value="AT1G55370"/>
</dbReference>
<dbReference type="EnsemblPlants" id="AT1G55370.2">
    <molecule id="Q9C503-1"/>
    <property type="protein sequence ID" value="AT1G55370.2"/>
    <property type="gene ID" value="AT1G55370"/>
</dbReference>
<dbReference type="GeneID" id="841984"/>
<dbReference type="Gramene" id="AT1G55370.1">
    <molecule id="Q9C503-2"/>
    <property type="protein sequence ID" value="AT1G55370.1"/>
    <property type="gene ID" value="AT1G55370"/>
</dbReference>
<dbReference type="Gramene" id="AT1G55370.2">
    <molecule id="Q9C503-1"/>
    <property type="protein sequence ID" value="AT1G55370.2"/>
    <property type="gene ID" value="AT1G55370"/>
</dbReference>
<dbReference type="KEGG" id="ath:AT1G55370"/>
<dbReference type="Araport" id="AT1G55370"/>
<dbReference type="TAIR" id="AT1G55370">
    <property type="gene designation" value="NDF5"/>
</dbReference>
<dbReference type="eggNOG" id="ENOG502QS85">
    <property type="taxonomic scope" value="Eukaryota"/>
</dbReference>
<dbReference type="HOGENOM" id="CLU_048345_0_0_1"/>
<dbReference type="InParanoid" id="Q9C503"/>
<dbReference type="OMA" id="YAYICTG"/>
<dbReference type="PhylomeDB" id="Q9C503"/>
<dbReference type="PRO" id="PR:Q9C503"/>
<dbReference type="Proteomes" id="UP000006548">
    <property type="component" value="Chromosome 1"/>
</dbReference>
<dbReference type="ExpressionAtlas" id="Q9C503">
    <property type="expression patterns" value="baseline and differential"/>
</dbReference>
<dbReference type="GO" id="GO:0009507">
    <property type="term" value="C:chloroplast"/>
    <property type="evidence" value="ECO:0000314"/>
    <property type="project" value="TAIR"/>
</dbReference>
<dbReference type="GO" id="GO:0009535">
    <property type="term" value="C:chloroplast thylakoid membrane"/>
    <property type="evidence" value="ECO:0007669"/>
    <property type="project" value="UniProtKB-SubCell"/>
</dbReference>
<dbReference type="GO" id="GO:0016020">
    <property type="term" value="C:membrane"/>
    <property type="evidence" value="ECO:0000314"/>
    <property type="project" value="TAIR"/>
</dbReference>
<dbReference type="GO" id="GO:0030246">
    <property type="term" value="F:carbohydrate binding"/>
    <property type="evidence" value="ECO:0007669"/>
    <property type="project" value="InterPro"/>
</dbReference>
<dbReference type="GO" id="GO:0003824">
    <property type="term" value="F:catalytic activity"/>
    <property type="evidence" value="ECO:0007669"/>
    <property type="project" value="InterPro"/>
</dbReference>
<dbReference type="GO" id="GO:0005975">
    <property type="term" value="P:carbohydrate metabolic process"/>
    <property type="evidence" value="ECO:0007669"/>
    <property type="project" value="InterPro"/>
</dbReference>
<dbReference type="GO" id="GO:0009773">
    <property type="term" value="P:photosynthetic electron transport in photosystem I"/>
    <property type="evidence" value="ECO:0000315"/>
    <property type="project" value="TAIR"/>
</dbReference>
<dbReference type="GO" id="GO:0010628">
    <property type="term" value="P:positive regulation of gene expression"/>
    <property type="evidence" value="ECO:0000315"/>
    <property type="project" value="TAIR"/>
</dbReference>
<dbReference type="FunFam" id="2.70.98.10:FF:000053">
    <property type="entry name" value="Predicted protein"/>
    <property type="match status" value="1"/>
</dbReference>
<dbReference type="Gene3D" id="2.70.98.10">
    <property type="match status" value="1"/>
</dbReference>
<dbReference type="InterPro" id="IPR011013">
    <property type="entry name" value="Gal_mutarotase_sf_dom"/>
</dbReference>
<dbReference type="InterPro" id="IPR014718">
    <property type="entry name" value="GH-type_carb-bd"/>
</dbReference>
<dbReference type="PANTHER" id="PTHR11122">
    <property type="entry name" value="APOSPORY-ASSOCIATED PROTEIN C-RELATED"/>
    <property type="match status" value="1"/>
</dbReference>
<dbReference type="PANTHER" id="PTHR11122:SF15">
    <property type="entry name" value="PROTEIN NDH-DEPENDENT CYCLIC ELECTRON FLOW 5"/>
    <property type="match status" value="1"/>
</dbReference>
<dbReference type="SUPFAM" id="SSF74650">
    <property type="entry name" value="Galactose mutarotase-like"/>
    <property type="match status" value="1"/>
</dbReference>
<proteinExistence type="evidence at transcript level"/>
<organism>
    <name type="scientific">Arabidopsis thaliana</name>
    <name type="common">Mouse-ear cress</name>
    <dbReference type="NCBI Taxonomy" id="3702"/>
    <lineage>
        <taxon>Eukaryota</taxon>
        <taxon>Viridiplantae</taxon>
        <taxon>Streptophyta</taxon>
        <taxon>Embryophyta</taxon>
        <taxon>Tracheophyta</taxon>
        <taxon>Spermatophyta</taxon>
        <taxon>Magnoliopsida</taxon>
        <taxon>eudicotyledons</taxon>
        <taxon>Gunneridae</taxon>
        <taxon>Pentapetalae</taxon>
        <taxon>rosids</taxon>
        <taxon>malvids</taxon>
        <taxon>Brassicales</taxon>
        <taxon>Brassicaceae</taxon>
        <taxon>Camelineae</taxon>
        <taxon>Arabidopsis</taxon>
    </lineage>
</organism>
<protein>
    <recommendedName>
        <fullName evidence="4">Protein NDH-DEPENDENT CYCLIC ELECTRON FLOW 5</fullName>
    </recommendedName>
</protein>
<feature type="transit peptide" description="Chloroplast" evidence="1">
    <location>
        <begin position="1"/>
        <end position="49"/>
    </location>
</feature>
<feature type="chain" id="PRO_0000433245" description="Protein NDH-DEPENDENT CYCLIC ELECTRON FLOW 5" evidence="1">
    <location>
        <begin position="50"/>
        <end position="354"/>
    </location>
</feature>
<feature type="splice variant" id="VSP_057692" description="In isoform 2.">
    <original>GRRNSVVVGREGFEEVYM</original>
    <variation>VVILTKLQLYLNFLCGFI</variation>
    <location>
        <begin position="291"/>
        <end position="308"/>
    </location>
</feature>
<feature type="splice variant" id="VSP_057693" description="In isoform 2.">
    <location>
        <begin position="309"/>
        <end position="354"/>
    </location>
</feature>
<feature type="sequence conflict" description="In Ref. 4; AAM64767." evidence="4" ref="4">
    <original>N</original>
    <variation>D</variation>
    <location>
        <position position="91"/>
    </location>
</feature>
<feature type="sequence conflict" description="In Ref. 4; AAM64767." evidence="4" ref="4">
    <original>P</original>
    <variation>S</variation>
    <location>
        <position position="311"/>
    </location>
</feature>